<comment type="function">
    <text evidence="1">NDH shuttles electrons from NAD(P)H:plastoquinone, via FMN and iron-sulfur (Fe-S) centers, to quinones in the photosynthetic chain and possibly in a chloroplast respiratory chain. The immediate electron acceptor for the enzyme in this species is believed to be plastoquinone. Couples the redox reaction to proton translocation, and thus conserves the redox energy in a proton gradient.</text>
</comment>
<comment type="catalytic activity">
    <reaction evidence="1">
        <text>a plastoquinone + NADH + (n+1) H(+)(in) = a plastoquinol + NAD(+) + n H(+)(out)</text>
        <dbReference type="Rhea" id="RHEA:42608"/>
        <dbReference type="Rhea" id="RHEA-COMP:9561"/>
        <dbReference type="Rhea" id="RHEA-COMP:9562"/>
        <dbReference type="ChEBI" id="CHEBI:15378"/>
        <dbReference type="ChEBI" id="CHEBI:17757"/>
        <dbReference type="ChEBI" id="CHEBI:57540"/>
        <dbReference type="ChEBI" id="CHEBI:57945"/>
        <dbReference type="ChEBI" id="CHEBI:62192"/>
    </reaction>
</comment>
<comment type="catalytic activity">
    <reaction evidence="1">
        <text>a plastoquinone + NADPH + (n+1) H(+)(in) = a plastoquinol + NADP(+) + n H(+)(out)</text>
        <dbReference type="Rhea" id="RHEA:42612"/>
        <dbReference type="Rhea" id="RHEA-COMP:9561"/>
        <dbReference type="Rhea" id="RHEA-COMP:9562"/>
        <dbReference type="ChEBI" id="CHEBI:15378"/>
        <dbReference type="ChEBI" id="CHEBI:17757"/>
        <dbReference type="ChEBI" id="CHEBI:57783"/>
        <dbReference type="ChEBI" id="CHEBI:58349"/>
        <dbReference type="ChEBI" id="CHEBI:62192"/>
    </reaction>
</comment>
<comment type="subunit">
    <text evidence="1">NDH is composed of at least 16 different subunits, 5 of which are encoded in the nucleus.</text>
</comment>
<comment type="subcellular location">
    <subcellularLocation>
        <location evidence="1">Plastid</location>
        <location evidence="1">Chloroplast thylakoid membrane</location>
        <topology evidence="1">Multi-pass membrane protein</topology>
    </subcellularLocation>
</comment>
<comment type="similarity">
    <text evidence="1">Belongs to the complex I subunit 1 family.</text>
</comment>
<keyword id="KW-0150">Chloroplast</keyword>
<keyword id="KW-0472">Membrane</keyword>
<keyword id="KW-0520">NAD</keyword>
<keyword id="KW-0521">NADP</keyword>
<keyword id="KW-0934">Plastid</keyword>
<keyword id="KW-0618">Plastoquinone</keyword>
<keyword id="KW-0874">Quinone</keyword>
<keyword id="KW-1185">Reference proteome</keyword>
<keyword id="KW-0793">Thylakoid</keyword>
<keyword id="KW-1278">Translocase</keyword>
<keyword id="KW-0812">Transmembrane</keyword>
<keyword id="KW-1133">Transmembrane helix</keyword>
<protein>
    <recommendedName>
        <fullName evidence="1">NAD(P)H-quinone oxidoreductase subunit 1, chloroplastic</fullName>
        <ecNumber evidence="1">7.1.1.-</ecNumber>
    </recommendedName>
    <alternativeName>
        <fullName evidence="1">NAD(P)H dehydrogenase subunit 1</fullName>
        <shortName evidence="1">NDH subunit 1</shortName>
    </alternativeName>
    <alternativeName>
        <fullName evidence="1">NADH-plastoquinone oxidoreductase subunit 1</fullName>
    </alternativeName>
</protein>
<sequence>MIIDTTELQAINSFFKLESLKEVYGIIWILIPIFTLVLGITIGVLVIVWLEREISAGIQQRIGPEYAGPLGILQALADGTKLLFKENLLPSRGDARLFSIGPSIAVISILLSYSVIPFGYRLVLADLTIGVFLWIAISSIAPIGLLMSGYGSNNKYSFLGGLRAAAQSISYEIPLTLCVLSISLLSNSSSTVDIVEAQSKYGFWGWNLWRQPIGFIIFLISSLAECERLPFDLPEAEEELVAGYQTEYSGIKFGLFYVASYLNLLVSSLFVTVLYLGGWNLSIPYIFVSEIFDINKAGKVFGPVIGIFITLAKTYLFLFIPIATRWTLPRLRMDQLLNLGWKFLLPISLGNLLLTTSSQLLSL</sequence>
<dbReference type="EC" id="7.1.1.-" evidence="1"/>
<dbReference type="EMBL" id="EF044213">
    <property type="protein sequence ID" value="ABJ89734.1"/>
    <property type="molecule type" value="Genomic_DNA"/>
</dbReference>
<dbReference type="RefSeq" id="YP_817537.1">
    <property type="nucleotide sequence ID" value="NC_008535.1"/>
</dbReference>
<dbReference type="SMR" id="A0A390"/>
<dbReference type="GeneID" id="4421856"/>
<dbReference type="OrthoDB" id="531329at2759"/>
<dbReference type="Proteomes" id="UP000515148">
    <property type="component" value="Chloroplast Pltd"/>
</dbReference>
<dbReference type="GO" id="GO:0009535">
    <property type="term" value="C:chloroplast thylakoid membrane"/>
    <property type="evidence" value="ECO:0007669"/>
    <property type="project" value="UniProtKB-SubCell"/>
</dbReference>
<dbReference type="GO" id="GO:0003954">
    <property type="term" value="F:NADH dehydrogenase activity"/>
    <property type="evidence" value="ECO:0007669"/>
    <property type="project" value="TreeGrafter"/>
</dbReference>
<dbReference type="GO" id="GO:0016655">
    <property type="term" value="F:oxidoreductase activity, acting on NAD(P)H, quinone or similar compound as acceptor"/>
    <property type="evidence" value="ECO:0007669"/>
    <property type="project" value="UniProtKB-UniRule"/>
</dbReference>
<dbReference type="GO" id="GO:0048038">
    <property type="term" value="F:quinone binding"/>
    <property type="evidence" value="ECO:0007669"/>
    <property type="project" value="UniProtKB-KW"/>
</dbReference>
<dbReference type="GO" id="GO:0009060">
    <property type="term" value="P:aerobic respiration"/>
    <property type="evidence" value="ECO:0007669"/>
    <property type="project" value="TreeGrafter"/>
</dbReference>
<dbReference type="GO" id="GO:0019684">
    <property type="term" value="P:photosynthesis, light reaction"/>
    <property type="evidence" value="ECO:0007669"/>
    <property type="project" value="UniProtKB-UniRule"/>
</dbReference>
<dbReference type="HAMAP" id="MF_01350">
    <property type="entry name" value="NDH1_NuoH"/>
    <property type="match status" value="1"/>
</dbReference>
<dbReference type="InterPro" id="IPR001694">
    <property type="entry name" value="NADH_UbQ_OxRdtase_su1/FPO"/>
</dbReference>
<dbReference type="InterPro" id="IPR018086">
    <property type="entry name" value="NADH_UbQ_OxRdtase_su1_CS"/>
</dbReference>
<dbReference type="NCBIfam" id="NF004741">
    <property type="entry name" value="PRK06076.1-2"/>
    <property type="match status" value="1"/>
</dbReference>
<dbReference type="PANTHER" id="PTHR11432">
    <property type="entry name" value="NADH DEHYDROGENASE SUBUNIT 1"/>
    <property type="match status" value="1"/>
</dbReference>
<dbReference type="PANTHER" id="PTHR11432:SF3">
    <property type="entry name" value="NADH-UBIQUINONE OXIDOREDUCTASE CHAIN 1"/>
    <property type="match status" value="1"/>
</dbReference>
<dbReference type="Pfam" id="PF00146">
    <property type="entry name" value="NADHdh"/>
    <property type="match status" value="1"/>
</dbReference>
<dbReference type="PROSITE" id="PS00667">
    <property type="entry name" value="COMPLEX1_ND1_1"/>
    <property type="match status" value="1"/>
</dbReference>
<dbReference type="PROSITE" id="PS00668">
    <property type="entry name" value="COMPLEX1_ND1_2"/>
    <property type="match status" value="1"/>
</dbReference>
<accession>A0A390</accession>
<geneLocation type="chloroplast"/>
<name>NU1C_COFAR</name>
<reference key="1">
    <citation type="journal article" date="2007" name="Plant Biotechnol. J.">
        <title>The complete nucleotide sequence of the coffee (Coffea arabica L.) chloroplast genome: organization and implications for biotechnology and phylogenetic relationships amongst angiosperms.</title>
        <authorList>
            <person name="Samson N."/>
            <person name="Bausher M.G."/>
            <person name="Lee S.-B."/>
            <person name="Jansen R.K."/>
            <person name="Daniell H."/>
        </authorList>
    </citation>
    <scope>NUCLEOTIDE SEQUENCE [LARGE SCALE GENOMIC DNA]</scope>
</reference>
<organism>
    <name type="scientific">Coffea arabica</name>
    <name type="common">Arabian coffee</name>
    <dbReference type="NCBI Taxonomy" id="13443"/>
    <lineage>
        <taxon>Eukaryota</taxon>
        <taxon>Viridiplantae</taxon>
        <taxon>Streptophyta</taxon>
        <taxon>Embryophyta</taxon>
        <taxon>Tracheophyta</taxon>
        <taxon>Spermatophyta</taxon>
        <taxon>Magnoliopsida</taxon>
        <taxon>eudicotyledons</taxon>
        <taxon>Gunneridae</taxon>
        <taxon>Pentapetalae</taxon>
        <taxon>asterids</taxon>
        <taxon>lamiids</taxon>
        <taxon>Gentianales</taxon>
        <taxon>Rubiaceae</taxon>
        <taxon>Ixoroideae</taxon>
        <taxon>Gardenieae complex</taxon>
        <taxon>Bertiereae - Coffeeae clade</taxon>
        <taxon>Coffeeae</taxon>
        <taxon>Coffea</taxon>
    </lineage>
</organism>
<evidence type="ECO:0000255" key="1">
    <source>
        <dbReference type="HAMAP-Rule" id="MF_01350"/>
    </source>
</evidence>
<proteinExistence type="inferred from homology"/>
<gene>
    <name evidence="1" type="primary">ndhA</name>
</gene>
<feature type="chain" id="PRO_0000275578" description="NAD(P)H-quinone oxidoreductase subunit 1, chloroplastic">
    <location>
        <begin position="1"/>
        <end position="363"/>
    </location>
</feature>
<feature type="transmembrane region" description="Helical" evidence="1">
    <location>
        <begin position="26"/>
        <end position="46"/>
    </location>
</feature>
<feature type="transmembrane region" description="Helical" evidence="1">
    <location>
        <begin position="98"/>
        <end position="118"/>
    </location>
</feature>
<feature type="transmembrane region" description="Helical" evidence="1">
    <location>
        <begin position="127"/>
        <end position="147"/>
    </location>
</feature>
<feature type="transmembrane region" description="Helical" evidence="1">
    <location>
        <begin position="246"/>
        <end position="266"/>
    </location>
</feature>
<feature type="transmembrane region" description="Helical" evidence="1">
    <location>
        <begin position="268"/>
        <end position="288"/>
    </location>
</feature>
<feature type="transmembrane region" description="Helical" evidence="1">
    <location>
        <begin position="300"/>
        <end position="320"/>
    </location>
</feature>
<feature type="transmembrane region" description="Helical" evidence="1">
    <location>
        <begin position="336"/>
        <end position="356"/>
    </location>
</feature>